<protein>
    <recommendedName>
        <fullName evidence="1">Isoprenyl transferase</fullName>
        <ecNumber evidence="1">2.5.1.-</ecNumber>
    </recommendedName>
</protein>
<accession>Q5WFT2</accession>
<organism>
    <name type="scientific">Shouchella clausii (strain KSM-K16)</name>
    <name type="common">Alkalihalobacillus clausii</name>
    <dbReference type="NCBI Taxonomy" id="66692"/>
    <lineage>
        <taxon>Bacteria</taxon>
        <taxon>Bacillati</taxon>
        <taxon>Bacillota</taxon>
        <taxon>Bacilli</taxon>
        <taxon>Bacillales</taxon>
        <taxon>Bacillaceae</taxon>
        <taxon>Shouchella</taxon>
    </lineage>
</organism>
<gene>
    <name evidence="1" type="primary">uppS</name>
    <name type="ordered locus">ABC2238</name>
</gene>
<proteinExistence type="inferred from homology"/>
<evidence type="ECO:0000255" key="1">
    <source>
        <dbReference type="HAMAP-Rule" id="MF_01139"/>
    </source>
</evidence>
<keyword id="KW-0460">Magnesium</keyword>
<keyword id="KW-0479">Metal-binding</keyword>
<keyword id="KW-1185">Reference proteome</keyword>
<keyword id="KW-0808">Transferase</keyword>
<dbReference type="EC" id="2.5.1.-" evidence="1"/>
<dbReference type="EMBL" id="AP006627">
    <property type="protein sequence ID" value="BAD64773.1"/>
    <property type="molecule type" value="Genomic_DNA"/>
</dbReference>
<dbReference type="RefSeq" id="WP_011247081.1">
    <property type="nucleotide sequence ID" value="NC_006582.1"/>
</dbReference>
<dbReference type="SMR" id="Q5WFT2"/>
<dbReference type="STRING" id="66692.ABC2238"/>
<dbReference type="KEGG" id="bcl:ABC2238"/>
<dbReference type="eggNOG" id="COG0020">
    <property type="taxonomic scope" value="Bacteria"/>
</dbReference>
<dbReference type="HOGENOM" id="CLU_038505_1_1_9"/>
<dbReference type="OrthoDB" id="4191603at2"/>
<dbReference type="Proteomes" id="UP000001168">
    <property type="component" value="Chromosome"/>
</dbReference>
<dbReference type="GO" id="GO:0005829">
    <property type="term" value="C:cytosol"/>
    <property type="evidence" value="ECO:0007669"/>
    <property type="project" value="TreeGrafter"/>
</dbReference>
<dbReference type="GO" id="GO:0008834">
    <property type="term" value="F:ditrans,polycis-undecaprenyl-diphosphate synthase [(2E,6E)-farnesyl-diphosphate specific] activity"/>
    <property type="evidence" value="ECO:0007669"/>
    <property type="project" value="TreeGrafter"/>
</dbReference>
<dbReference type="GO" id="GO:0000287">
    <property type="term" value="F:magnesium ion binding"/>
    <property type="evidence" value="ECO:0007669"/>
    <property type="project" value="UniProtKB-UniRule"/>
</dbReference>
<dbReference type="GO" id="GO:0030145">
    <property type="term" value="F:manganese ion binding"/>
    <property type="evidence" value="ECO:0007669"/>
    <property type="project" value="TreeGrafter"/>
</dbReference>
<dbReference type="GO" id="GO:0016094">
    <property type="term" value="P:polyprenol biosynthetic process"/>
    <property type="evidence" value="ECO:0007669"/>
    <property type="project" value="TreeGrafter"/>
</dbReference>
<dbReference type="CDD" id="cd00475">
    <property type="entry name" value="Cis_IPPS"/>
    <property type="match status" value="1"/>
</dbReference>
<dbReference type="FunFam" id="3.40.1180.10:FF:000001">
    <property type="entry name" value="(2E,6E)-farnesyl-diphosphate-specific ditrans,polycis-undecaprenyl-diphosphate synthase"/>
    <property type="match status" value="1"/>
</dbReference>
<dbReference type="Gene3D" id="3.40.1180.10">
    <property type="entry name" value="Decaprenyl diphosphate synthase-like"/>
    <property type="match status" value="1"/>
</dbReference>
<dbReference type="HAMAP" id="MF_01139">
    <property type="entry name" value="ISPT"/>
    <property type="match status" value="1"/>
</dbReference>
<dbReference type="InterPro" id="IPR001441">
    <property type="entry name" value="UPP_synth-like"/>
</dbReference>
<dbReference type="InterPro" id="IPR018520">
    <property type="entry name" value="UPP_synth-like_CS"/>
</dbReference>
<dbReference type="InterPro" id="IPR036424">
    <property type="entry name" value="UPP_synth-like_sf"/>
</dbReference>
<dbReference type="NCBIfam" id="NF011405">
    <property type="entry name" value="PRK14830.1"/>
    <property type="match status" value="1"/>
</dbReference>
<dbReference type="NCBIfam" id="TIGR00055">
    <property type="entry name" value="uppS"/>
    <property type="match status" value="1"/>
</dbReference>
<dbReference type="PANTHER" id="PTHR10291:SF0">
    <property type="entry name" value="DEHYDRODOLICHYL DIPHOSPHATE SYNTHASE 2"/>
    <property type="match status" value="1"/>
</dbReference>
<dbReference type="PANTHER" id="PTHR10291">
    <property type="entry name" value="DEHYDRODOLICHYL DIPHOSPHATE SYNTHASE FAMILY MEMBER"/>
    <property type="match status" value="1"/>
</dbReference>
<dbReference type="Pfam" id="PF01255">
    <property type="entry name" value="Prenyltransf"/>
    <property type="match status" value="1"/>
</dbReference>
<dbReference type="SUPFAM" id="SSF64005">
    <property type="entry name" value="Undecaprenyl diphosphate synthase"/>
    <property type="match status" value="1"/>
</dbReference>
<dbReference type="PROSITE" id="PS01066">
    <property type="entry name" value="UPP_SYNTHASE"/>
    <property type="match status" value="1"/>
</dbReference>
<name>ISPT_SHOC1</name>
<sequence length="257" mass="29839">MLERFSKWRQAFTDTEDEEPTSIDPQNIPRHVAIIMDGNGRWAKEKGLPRIAGHREGMKTVNKIVRAANTLNIEILTLYAFSTENWKRPKAEVEFLLKLPERYLKSELPTLIEENVQVRLMGSKDGLPSYTLHAVDEAIEKTKHNTGLILNFALNYGSRFELTSAMQQIAKKVQQGELMPEHITEETISAHLMSNHLRDPDLLIRTSGELRLSNFMLWQIAYSEFLFMDVYWPNFTEHHFYKAVLTYQNRGRRYGGV</sequence>
<comment type="function">
    <text evidence="1">Catalyzes the condensation of isopentenyl diphosphate (IPP) with allylic pyrophosphates generating different type of terpenoids.</text>
</comment>
<comment type="cofactor">
    <cofactor evidence="1">
        <name>Mg(2+)</name>
        <dbReference type="ChEBI" id="CHEBI:18420"/>
    </cofactor>
    <text evidence="1">Binds 2 magnesium ions per subunit.</text>
</comment>
<comment type="subunit">
    <text evidence="1">Homodimer.</text>
</comment>
<comment type="similarity">
    <text evidence="1">Belongs to the UPP synthase family.</text>
</comment>
<reference key="1">
    <citation type="submission" date="2003-10" db="EMBL/GenBank/DDBJ databases">
        <title>The complete genome sequence of the alkaliphilic Bacillus clausii KSM-K16.</title>
        <authorList>
            <person name="Takaki Y."/>
            <person name="Kageyama Y."/>
            <person name="Shimamura S."/>
            <person name="Suzuki H."/>
            <person name="Nishi S."/>
            <person name="Hatada Y."/>
            <person name="Kawai S."/>
            <person name="Ito S."/>
            <person name="Horikoshi K."/>
        </authorList>
    </citation>
    <scope>NUCLEOTIDE SEQUENCE [LARGE SCALE GENOMIC DNA]</scope>
    <source>
        <strain>KSM-K16</strain>
    </source>
</reference>
<feature type="chain" id="PRO_0000123571" description="Isoprenyl transferase">
    <location>
        <begin position="1"/>
        <end position="257"/>
    </location>
</feature>
<feature type="active site" evidence="1">
    <location>
        <position position="37"/>
    </location>
</feature>
<feature type="active site" description="Proton acceptor" evidence="1">
    <location>
        <position position="85"/>
    </location>
</feature>
<feature type="binding site" evidence="1">
    <location>
        <position position="37"/>
    </location>
    <ligand>
        <name>Mg(2+)</name>
        <dbReference type="ChEBI" id="CHEBI:18420"/>
    </ligand>
</feature>
<feature type="binding site" evidence="1">
    <location>
        <begin position="38"/>
        <end position="41"/>
    </location>
    <ligand>
        <name>substrate</name>
    </ligand>
</feature>
<feature type="binding site" evidence="1">
    <location>
        <position position="42"/>
    </location>
    <ligand>
        <name>substrate</name>
    </ligand>
</feature>
<feature type="binding site" evidence="1">
    <location>
        <position position="50"/>
    </location>
    <ligand>
        <name>substrate</name>
    </ligand>
</feature>
<feature type="binding site" evidence="1">
    <location>
        <position position="54"/>
    </location>
    <ligand>
        <name>substrate</name>
    </ligand>
</feature>
<feature type="binding site" evidence="1">
    <location>
        <begin position="82"/>
        <end position="84"/>
    </location>
    <ligand>
        <name>substrate</name>
    </ligand>
</feature>
<feature type="binding site" evidence="1">
    <location>
        <position position="86"/>
    </location>
    <ligand>
        <name>substrate</name>
    </ligand>
</feature>
<feature type="binding site" evidence="1">
    <location>
        <position position="88"/>
    </location>
    <ligand>
        <name>substrate</name>
    </ligand>
</feature>
<feature type="binding site" evidence="1">
    <location>
        <position position="205"/>
    </location>
    <ligand>
        <name>substrate</name>
    </ligand>
</feature>
<feature type="binding site" evidence="1">
    <location>
        <begin position="211"/>
        <end position="213"/>
    </location>
    <ligand>
        <name>substrate</name>
    </ligand>
</feature>
<feature type="binding site" evidence="1">
    <location>
        <position position="224"/>
    </location>
    <ligand>
        <name>Mg(2+)</name>
        <dbReference type="ChEBI" id="CHEBI:18420"/>
    </ligand>
</feature>